<dbReference type="EC" id="5.5.1.34" evidence="2 3"/>
<dbReference type="EMBL" id="MG677125">
    <property type="protein sequence ID" value="AXF35972.1"/>
    <property type="molecule type" value="mRNA"/>
</dbReference>
<dbReference type="SMR" id="A0A3Q8GYY4"/>
<dbReference type="KEGG" id="ag:AXF35972"/>
<dbReference type="BRENDA" id="5.5.1.34">
    <property type="organism ID" value="12895"/>
</dbReference>
<dbReference type="GO" id="GO:0016853">
    <property type="term" value="F:isomerase activity"/>
    <property type="evidence" value="ECO:0007669"/>
    <property type="project" value="UniProtKB-KW"/>
</dbReference>
<dbReference type="GO" id="GO:0016491">
    <property type="term" value="F:oxidoreductase activity"/>
    <property type="evidence" value="ECO:0007669"/>
    <property type="project" value="InterPro"/>
</dbReference>
<dbReference type="FunFam" id="3.40.50.720:FF:000084">
    <property type="entry name" value="Short-chain dehydrogenase reductase"/>
    <property type="match status" value="1"/>
</dbReference>
<dbReference type="Gene3D" id="3.40.50.720">
    <property type="entry name" value="NAD(P)-binding Rossmann-like Domain"/>
    <property type="match status" value="1"/>
</dbReference>
<dbReference type="InterPro" id="IPR036291">
    <property type="entry name" value="NAD(P)-bd_dom_sf"/>
</dbReference>
<dbReference type="InterPro" id="IPR020904">
    <property type="entry name" value="Sc_DH/Rdtase_CS"/>
</dbReference>
<dbReference type="InterPro" id="IPR002347">
    <property type="entry name" value="SDR_fam"/>
</dbReference>
<dbReference type="PANTHER" id="PTHR42820">
    <property type="entry name" value="SHORT-CHAIN DEHYDROGENASE REDUCTASE"/>
    <property type="match status" value="1"/>
</dbReference>
<dbReference type="PANTHER" id="PTHR42820:SF21">
    <property type="entry name" value="SHORT-CHAIN DEHYDROGENASE REDUCTASE 3B-LIKE"/>
    <property type="match status" value="1"/>
</dbReference>
<dbReference type="Pfam" id="PF13561">
    <property type="entry name" value="adh_short_C2"/>
    <property type="match status" value="1"/>
</dbReference>
<dbReference type="PRINTS" id="PR00081">
    <property type="entry name" value="GDHRDH"/>
</dbReference>
<dbReference type="SUPFAM" id="SSF51735">
    <property type="entry name" value="NAD(P)-binding Rossmann-fold domains"/>
    <property type="match status" value="1"/>
</dbReference>
<dbReference type="PROSITE" id="PS00061">
    <property type="entry name" value="ADH_SHORT"/>
    <property type="match status" value="1"/>
</dbReference>
<feature type="chain" id="PRO_0000449832" description="(+)-cis,trans-nepetalactol synthase NEPS2">
    <location>
        <begin position="1"/>
        <end position="268"/>
    </location>
</feature>
<feature type="binding site" evidence="1">
    <location>
        <begin position="16"/>
        <end position="22"/>
    </location>
    <ligand>
        <name>NAD(+)</name>
        <dbReference type="ChEBI" id="CHEBI:57540"/>
    </ligand>
</feature>
<feature type="binding site" evidence="1">
    <location>
        <begin position="41"/>
        <end position="43"/>
    </location>
    <ligand>
        <name>NAD(+)</name>
        <dbReference type="ChEBI" id="CHEBI:57540"/>
    </ligand>
</feature>
<feature type="binding site" evidence="1">
    <location>
        <begin position="65"/>
        <end position="66"/>
    </location>
    <ligand>
        <name>NAD(+)</name>
        <dbReference type="ChEBI" id="CHEBI:57540"/>
    </ligand>
</feature>
<feature type="binding site" evidence="1">
    <location>
        <position position="92"/>
    </location>
    <ligand>
        <name>NAD(+)</name>
        <dbReference type="ChEBI" id="CHEBI:57540"/>
    </ligand>
</feature>
<feature type="binding site" evidence="1">
    <location>
        <begin position="163"/>
        <end position="167"/>
    </location>
    <ligand>
        <name>NAD(+)</name>
        <dbReference type="ChEBI" id="CHEBI:57540"/>
    </ligand>
</feature>
<feature type="binding site" evidence="1">
    <location>
        <begin position="196"/>
        <end position="200"/>
    </location>
    <ligand>
        <name>NAD(+)</name>
        <dbReference type="ChEBI" id="CHEBI:57540"/>
    </ligand>
</feature>
<protein>
    <recommendedName>
        <fullName evidence="5">(+)-cis,trans-nepetalactol synthase NEPS2</fullName>
        <ecNumber evidence="2 3">5.5.1.34</ecNumber>
    </recommendedName>
    <alternativeName>
        <fullName evidence="4">Nepetalactol-related short-chain reductase 2</fullName>
        <shortName evidence="4">NmNEPS2</shortName>
    </alternativeName>
</protein>
<accession>A0A3Q8GYY4</accession>
<proteinExistence type="evidence at protein level"/>
<evidence type="ECO:0000250" key="1">
    <source>
        <dbReference type="UniProtKB" id="A0A3Q8GLE8"/>
    </source>
</evidence>
<evidence type="ECO:0000269" key="2">
    <source>
    </source>
</evidence>
<evidence type="ECO:0000269" key="3">
    <source>
    </source>
</evidence>
<evidence type="ECO:0000303" key="4">
    <source>
    </source>
</evidence>
<evidence type="ECO:0000305" key="5"/>
<comment type="function">
    <text evidence="1 2 3">Functions as a non-oxidoreductive cyclase to promote the formation of cis-trans-nepetalactol (PubMed:30531909, PubMed:30664302). Cis-trans-nepetalactol is then oxidized by NEPS1 into cis-trans-nepetalactone, which belongs to a family of metabolites that are both insect-repellent and have euphoric effect in cats (PubMed:30531909, PubMed:30664302). Binds NAD(+) as classical short-chain dehydrogenase/reductase (SDR), but does not utilize it for its redox-neutral cyclase activity (By similarity).</text>
</comment>
<comment type="catalytic activity">
    <reaction evidence="2 3">
        <text>(S)-8-oxocitronellyl enol = cis-trans-nepetalactol</text>
        <dbReference type="Rhea" id="RHEA:61416"/>
        <dbReference type="ChEBI" id="CHEBI:71494"/>
        <dbReference type="ChEBI" id="CHEBI:144481"/>
        <dbReference type="EC" id="5.5.1.34"/>
    </reaction>
    <physiologicalReaction direction="left-to-right" evidence="2 3">
        <dbReference type="Rhea" id="RHEA:61417"/>
    </physiologicalReaction>
</comment>
<comment type="similarity">
    <text evidence="5">Belongs to the short-chain dehydrogenases/reductases (SDR) family.</text>
</comment>
<keyword id="KW-0413">Isomerase</keyword>
<keyword id="KW-0520">NAD</keyword>
<name>NEPS2_NEPRA</name>
<gene>
    <name evidence="4" type="primary">NEPS2</name>
</gene>
<organism>
    <name type="scientific">Nepeta racemosa</name>
    <name type="common">Catmint</name>
    <name type="synonym">Raceme catnip</name>
    <dbReference type="NCBI Taxonomy" id="54731"/>
    <lineage>
        <taxon>Eukaryota</taxon>
        <taxon>Viridiplantae</taxon>
        <taxon>Streptophyta</taxon>
        <taxon>Embryophyta</taxon>
        <taxon>Tracheophyta</taxon>
        <taxon>Spermatophyta</taxon>
        <taxon>Magnoliopsida</taxon>
        <taxon>eudicotyledons</taxon>
        <taxon>Gunneridae</taxon>
        <taxon>Pentapetalae</taxon>
        <taxon>asterids</taxon>
        <taxon>lamiids</taxon>
        <taxon>Lamiales</taxon>
        <taxon>Lamiaceae</taxon>
        <taxon>Nepetoideae</taxon>
        <taxon>Mentheae</taxon>
        <taxon>Nepetinae</taxon>
        <taxon>Nepeta</taxon>
    </lineage>
</organism>
<sequence>MGNKKTLEGKVAIVTGGASGIGETAARVFANLGARAVVIADIQSELGREVAESIGAKRCSYVQCDIGDEEQVKSMVEWTATTYGALDVMFCNAGIMSKAESAQTVLELDMSKFDEVMRVNTRGTSACVKQAARKMVELGTKGGAIVCTSSPLASRGGYIDTDYVMSKHAVMGLVRSASMQLGAHGIRVNSVSPMAVLTPLTRRMGLATPADVENAFGRFTSLKGVALTAEHVAEAAAFLASDEAAFITGHDLMVDGGLLCLPFFAPTS</sequence>
<reference key="1">
    <citation type="journal article" date="2019" name="Nat. Chem. Biol.">
        <title>Uncoupled activation and cyclization in catmint reductive terpenoid biosynthesis.</title>
        <authorList>
            <person name="Lichman B.R."/>
            <person name="Kamileen M.O."/>
            <person name="Titchiner G.R."/>
            <person name="Saalbach G."/>
            <person name="Stevenson C.E.M."/>
            <person name="Lawson D.M."/>
            <person name="O'Connor S.E."/>
        </authorList>
    </citation>
    <scope>NUCLEOTIDE SEQUENCE [MRNA]</scope>
</reference>
<reference key="2">
    <citation type="journal article" date="2019" name="Chemistry">
        <title>Biocatalytic strategies towards [4+2] cycloadditions.</title>
        <authorList>
            <person name="Lichman B.R."/>
            <person name="O'Connor S.E."/>
            <person name="Kries H."/>
        </authorList>
    </citation>
    <scope>FUNCTION</scope>
    <scope>CATALYTIC ACTIVITY</scope>
</reference>